<organism>
    <name type="scientific">Bacillus subtilis (strain 168)</name>
    <dbReference type="NCBI Taxonomy" id="224308"/>
    <lineage>
        <taxon>Bacteria</taxon>
        <taxon>Bacillati</taxon>
        <taxon>Bacillota</taxon>
        <taxon>Bacilli</taxon>
        <taxon>Bacillales</taxon>
        <taxon>Bacillaceae</taxon>
        <taxon>Bacillus</taxon>
    </lineage>
</organism>
<gene>
    <name type="primary">sapB</name>
    <name type="ordered locus">BSU06650</name>
</gene>
<protein>
    <recommendedName>
        <fullName>Protein SapB</fullName>
    </recommendedName>
</protein>
<accession>Q45514</accession>
<feature type="chain" id="PRO_0000202030" description="Protein SapB">
    <location>
        <begin position="1"/>
        <end position="232"/>
    </location>
</feature>
<feature type="transmembrane region" description="Helical" evidence="1">
    <location>
        <begin position="7"/>
        <end position="27"/>
    </location>
</feature>
<feature type="transmembrane region" description="Helical" evidence="1">
    <location>
        <begin position="42"/>
        <end position="62"/>
    </location>
</feature>
<feature type="transmembrane region" description="Helical" evidence="1">
    <location>
        <begin position="72"/>
        <end position="92"/>
    </location>
</feature>
<feature type="transmembrane region" description="Helical" evidence="1">
    <location>
        <begin position="102"/>
        <end position="122"/>
    </location>
</feature>
<feature type="transmembrane region" description="Helical" evidence="1">
    <location>
        <begin position="124"/>
        <end position="144"/>
    </location>
</feature>
<feature type="mutagenesis site" description="In sapB2 and sapB10; activates alkaline phosphatase during sporulation." evidence="2">
    <original>A</original>
    <variation>T</variation>
    <location>
        <position position="111"/>
    </location>
</feature>
<comment type="subcellular location">
    <subcellularLocation>
        <location evidence="3">Cell membrane</location>
        <topology evidence="3">Multi-pass membrane protein</topology>
    </subcellularLocation>
</comment>
<comment type="developmental stage">
    <text evidence="2">Induced during late exponential phase, and maximum expression is reached during the first hour of stationary phase, both under sporulation and non-sporulation conditions.</text>
</comment>
<comment type="disruption phenotype">
    <text evidence="2">Cells activate alkaline phosphatase during sporulation; the same phenotype is seen in the sapB2 and sapB10 mutants.</text>
</comment>
<comment type="similarity">
    <text evidence="3">Belongs to the MgtC/SapB family.</text>
</comment>
<keyword id="KW-1003">Cell membrane</keyword>
<keyword id="KW-0472">Membrane</keyword>
<keyword id="KW-1185">Reference proteome</keyword>
<keyword id="KW-0812">Transmembrane</keyword>
<keyword id="KW-1133">Transmembrane helix</keyword>
<sequence length="232" mass="25936">MLLSWYIDPDILLKLGIATLIGMVIGLERELKNKPLGLKTCIVIAVSSCMLTIVSINAAYHFPKYYRIMMDPLRLPAQIISGVGFIGAGVILRKSNDVISGLTTSAMIWGAAGLGLATGAGFYKEAFASLLFILISVEFLPWVVRKIGPDRLQEKDIRIRMSLSDKDKMTEILKEMKRRDIKAHSVRIDDLGEKDFPIMEVKVRVHKNRYTTDVYYDIKAIEGVVGVKCDTL</sequence>
<name>SAPB_BACSU</name>
<proteinExistence type="evidence at protein level"/>
<evidence type="ECO:0000255" key="1"/>
<evidence type="ECO:0000269" key="2">
    <source>
    </source>
</evidence>
<evidence type="ECO:0000305" key="3"/>
<reference key="1">
    <citation type="journal article" date="1997" name="Microbiology">
        <title>Gain-of-function mutation of sapB that affects formation of alkaline phosphatase by Bacillus subtilis in sporulation conditions.</title>
        <authorList>
            <person name="Whalen M.B."/>
            <person name="Piggot P.J."/>
        </authorList>
    </citation>
    <scope>NUCLEOTIDE SEQUENCE [GENOMIC DNA]</scope>
    <scope>DISRUPTION PHENOTYPE</scope>
    <scope>MUTAGENESIS OF ALA-111</scope>
    <scope>DEVELOPMENTAL STAGE</scope>
    <source>
        <strain>168</strain>
    </source>
</reference>
<reference key="2">
    <citation type="journal article" date="1996" name="Microbiology">
        <title>The 52 degrees-55 degrees segment of the Bacillus subtilis chromosome: a region devoted to purine uptake and metabolism, and containing the genes cotA, gabP and guaA and the pur gene cluster within a 34960 bp nucleotide sequence.</title>
        <authorList>
            <person name="Borriss R."/>
            <person name="Porwollik S."/>
            <person name="Schroeter R."/>
        </authorList>
    </citation>
    <scope>NUCLEOTIDE SEQUENCE [GENOMIC DNA]</scope>
    <source>
        <strain>168</strain>
    </source>
</reference>
<reference key="3">
    <citation type="journal article" date="1997" name="Nature">
        <title>The complete genome sequence of the Gram-positive bacterium Bacillus subtilis.</title>
        <authorList>
            <person name="Kunst F."/>
            <person name="Ogasawara N."/>
            <person name="Moszer I."/>
            <person name="Albertini A.M."/>
            <person name="Alloni G."/>
            <person name="Azevedo V."/>
            <person name="Bertero M.G."/>
            <person name="Bessieres P."/>
            <person name="Bolotin A."/>
            <person name="Borchert S."/>
            <person name="Borriss R."/>
            <person name="Boursier L."/>
            <person name="Brans A."/>
            <person name="Braun M."/>
            <person name="Brignell S.C."/>
            <person name="Bron S."/>
            <person name="Brouillet S."/>
            <person name="Bruschi C.V."/>
            <person name="Caldwell B."/>
            <person name="Capuano V."/>
            <person name="Carter N.M."/>
            <person name="Choi S.-K."/>
            <person name="Codani J.-J."/>
            <person name="Connerton I.F."/>
            <person name="Cummings N.J."/>
            <person name="Daniel R.A."/>
            <person name="Denizot F."/>
            <person name="Devine K.M."/>
            <person name="Duesterhoeft A."/>
            <person name="Ehrlich S.D."/>
            <person name="Emmerson P.T."/>
            <person name="Entian K.-D."/>
            <person name="Errington J."/>
            <person name="Fabret C."/>
            <person name="Ferrari E."/>
            <person name="Foulger D."/>
            <person name="Fritz C."/>
            <person name="Fujita M."/>
            <person name="Fujita Y."/>
            <person name="Fuma S."/>
            <person name="Galizzi A."/>
            <person name="Galleron N."/>
            <person name="Ghim S.-Y."/>
            <person name="Glaser P."/>
            <person name="Goffeau A."/>
            <person name="Golightly E.J."/>
            <person name="Grandi G."/>
            <person name="Guiseppi G."/>
            <person name="Guy B.J."/>
            <person name="Haga K."/>
            <person name="Haiech J."/>
            <person name="Harwood C.R."/>
            <person name="Henaut A."/>
            <person name="Hilbert H."/>
            <person name="Holsappel S."/>
            <person name="Hosono S."/>
            <person name="Hullo M.-F."/>
            <person name="Itaya M."/>
            <person name="Jones L.-M."/>
            <person name="Joris B."/>
            <person name="Karamata D."/>
            <person name="Kasahara Y."/>
            <person name="Klaerr-Blanchard M."/>
            <person name="Klein C."/>
            <person name="Kobayashi Y."/>
            <person name="Koetter P."/>
            <person name="Koningstein G."/>
            <person name="Krogh S."/>
            <person name="Kumano M."/>
            <person name="Kurita K."/>
            <person name="Lapidus A."/>
            <person name="Lardinois S."/>
            <person name="Lauber J."/>
            <person name="Lazarevic V."/>
            <person name="Lee S.-M."/>
            <person name="Levine A."/>
            <person name="Liu H."/>
            <person name="Masuda S."/>
            <person name="Mauel C."/>
            <person name="Medigue C."/>
            <person name="Medina N."/>
            <person name="Mellado R.P."/>
            <person name="Mizuno M."/>
            <person name="Moestl D."/>
            <person name="Nakai S."/>
            <person name="Noback M."/>
            <person name="Noone D."/>
            <person name="O'Reilly M."/>
            <person name="Ogawa K."/>
            <person name="Ogiwara A."/>
            <person name="Oudega B."/>
            <person name="Park S.-H."/>
            <person name="Parro V."/>
            <person name="Pohl T.M."/>
            <person name="Portetelle D."/>
            <person name="Porwollik S."/>
            <person name="Prescott A.M."/>
            <person name="Presecan E."/>
            <person name="Pujic P."/>
            <person name="Purnelle B."/>
            <person name="Rapoport G."/>
            <person name="Rey M."/>
            <person name="Reynolds S."/>
            <person name="Rieger M."/>
            <person name="Rivolta C."/>
            <person name="Rocha E."/>
            <person name="Roche B."/>
            <person name="Rose M."/>
            <person name="Sadaie Y."/>
            <person name="Sato T."/>
            <person name="Scanlan E."/>
            <person name="Schleich S."/>
            <person name="Schroeter R."/>
            <person name="Scoffone F."/>
            <person name="Sekiguchi J."/>
            <person name="Sekowska A."/>
            <person name="Seror S.J."/>
            <person name="Serror P."/>
            <person name="Shin B.-S."/>
            <person name="Soldo B."/>
            <person name="Sorokin A."/>
            <person name="Tacconi E."/>
            <person name="Takagi T."/>
            <person name="Takahashi H."/>
            <person name="Takemaru K."/>
            <person name="Takeuchi M."/>
            <person name="Tamakoshi A."/>
            <person name="Tanaka T."/>
            <person name="Terpstra P."/>
            <person name="Tognoni A."/>
            <person name="Tosato V."/>
            <person name="Uchiyama S."/>
            <person name="Vandenbol M."/>
            <person name="Vannier F."/>
            <person name="Vassarotti A."/>
            <person name="Viari A."/>
            <person name="Wambutt R."/>
            <person name="Wedler E."/>
            <person name="Wedler H."/>
            <person name="Weitzenegger T."/>
            <person name="Winters P."/>
            <person name="Wipat A."/>
            <person name="Yamamoto H."/>
            <person name="Yamane K."/>
            <person name="Yasumoto K."/>
            <person name="Yata K."/>
            <person name="Yoshida K."/>
            <person name="Yoshikawa H.-F."/>
            <person name="Zumstein E."/>
            <person name="Yoshikawa H."/>
            <person name="Danchin A."/>
        </authorList>
    </citation>
    <scope>NUCLEOTIDE SEQUENCE [LARGE SCALE GENOMIC DNA]</scope>
    <source>
        <strain>168</strain>
    </source>
</reference>
<reference key="4">
    <citation type="journal article" date="1997" name="Mol. Microbiol.">
        <title>Osmostress response in Bacillus subtilis: characterization of a proline uptake system (OpuE) regulated by high osmolarity and the alternative transcription factor sigma B.</title>
        <authorList>
            <person name="von Blohn C."/>
            <person name="Kempf B."/>
            <person name="Kappes R.M."/>
            <person name="Bremer E."/>
        </authorList>
    </citation>
    <scope>NUCLEOTIDE SEQUENCE [GENOMIC DNA] OF 1-72</scope>
    <source>
        <strain>168 / JH642</strain>
    </source>
</reference>
<reference key="5">
    <citation type="journal article" date="1998" name="Mol. Microbiol.">
        <title>PcrA is an essential DNA helicase of Bacillus subtilis fulfilling functions both in repair and rolling-circle replication.</title>
        <authorList>
            <person name="Petit M.-A."/>
            <person name="Dervyn E."/>
            <person name="Rose M."/>
            <person name="Entian K.-D."/>
            <person name="McGovern S."/>
            <person name="Ehrlich S.D."/>
            <person name="Bruand C."/>
        </authorList>
    </citation>
    <scope>NUCLEOTIDE SEQUENCE [GENOMIC DNA] OF 63-232</scope>
    <source>
        <strain>168</strain>
    </source>
</reference>
<dbReference type="EMBL" id="U59128">
    <property type="protein sequence ID" value="AAB03321.1"/>
    <property type="molecule type" value="Genomic_DNA"/>
</dbReference>
<dbReference type="EMBL" id="AF011545">
    <property type="protein sequence ID" value="AAB72181.1"/>
    <property type="molecule type" value="Genomic_DNA"/>
</dbReference>
<dbReference type="EMBL" id="AL009126">
    <property type="protein sequence ID" value="CAB12485.1"/>
    <property type="molecule type" value="Genomic_DNA"/>
</dbReference>
<dbReference type="EMBL" id="U92466">
    <property type="protein sequence ID" value="AAB66515.1"/>
    <property type="molecule type" value="Genomic_DNA"/>
</dbReference>
<dbReference type="EMBL" id="Y15254">
    <property type="protein sequence ID" value="CAA75555.1"/>
    <property type="molecule type" value="Genomic_DNA"/>
</dbReference>
<dbReference type="PIR" id="G69703">
    <property type="entry name" value="G69703"/>
</dbReference>
<dbReference type="RefSeq" id="NP_388547.1">
    <property type="nucleotide sequence ID" value="NC_000964.3"/>
</dbReference>
<dbReference type="RefSeq" id="WP_010886431.1">
    <property type="nucleotide sequence ID" value="NZ_OZ025638.1"/>
</dbReference>
<dbReference type="SMR" id="Q45514"/>
<dbReference type="FunCoup" id="Q45514">
    <property type="interactions" value="41"/>
</dbReference>
<dbReference type="STRING" id="224308.BSU06650"/>
<dbReference type="PaxDb" id="224308-BSU06650"/>
<dbReference type="EnsemblBacteria" id="CAB12485">
    <property type="protein sequence ID" value="CAB12485"/>
    <property type="gene ID" value="BSU_06650"/>
</dbReference>
<dbReference type="GeneID" id="936054"/>
<dbReference type="KEGG" id="bsu:BSU06650"/>
<dbReference type="PATRIC" id="fig|224308.43.peg.702"/>
<dbReference type="eggNOG" id="COG1285">
    <property type="taxonomic scope" value="Bacteria"/>
</dbReference>
<dbReference type="InParanoid" id="Q45514"/>
<dbReference type="OrthoDB" id="9811198at2"/>
<dbReference type="PhylomeDB" id="Q45514"/>
<dbReference type="BioCyc" id="BSUB:BSU06650-MONOMER"/>
<dbReference type="Proteomes" id="UP000001570">
    <property type="component" value="Chromosome"/>
</dbReference>
<dbReference type="GO" id="GO:0005886">
    <property type="term" value="C:plasma membrane"/>
    <property type="evidence" value="ECO:0007669"/>
    <property type="project" value="UniProtKB-SubCell"/>
</dbReference>
<dbReference type="InterPro" id="IPR003416">
    <property type="entry name" value="MgtC/SapB/SrpB/YhiD_fam"/>
</dbReference>
<dbReference type="InterPro" id="IPR049177">
    <property type="entry name" value="MgtC_SapB_SrpB_YhiD_N"/>
</dbReference>
<dbReference type="PANTHER" id="PTHR33778">
    <property type="entry name" value="PROTEIN MGTC"/>
    <property type="match status" value="1"/>
</dbReference>
<dbReference type="PANTHER" id="PTHR33778:SF4">
    <property type="entry name" value="PROTEIN SAPB"/>
    <property type="match status" value="1"/>
</dbReference>
<dbReference type="Pfam" id="PF02308">
    <property type="entry name" value="MgtC"/>
    <property type="match status" value="1"/>
</dbReference>
<dbReference type="PRINTS" id="PR01837">
    <property type="entry name" value="MGTCSAPBPROT"/>
</dbReference>